<protein>
    <recommendedName>
        <fullName evidence="1">Fe(3+) ions import ATP-binding protein FbpC</fullName>
        <ecNumber evidence="1">7.2.2.7</ecNumber>
    </recommendedName>
</protein>
<gene>
    <name evidence="1" type="primary">fbpC</name>
    <name type="synonym">afuC</name>
    <name type="ordered locus">Atu4786</name>
    <name type="ORF">AGR_L_193</name>
</gene>
<reference key="1">
    <citation type="journal article" date="2001" name="Science">
        <title>The genome of the natural genetic engineer Agrobacterium tumefaciens C58.</title>
        <authorList>
            <person name="Wood D.W."/>
            <person name="Setubal J.C."/>
            <person name="Kaul R."/>
            <person name="Monks D.E."/>
            <person name="Kitajima J.P."/>
            <person name="Okura V.K."/>
            <person name="Zhou Y."/>
            <person name="Chen L."/>
            <person name="Wood G.E."/>
            <person name="Almeida N.F. Jr."/>
            <person name="Woo L."/>
            <person name="Chen Y."/>
            <person name="Paulsen I.T."/>
            <person name="Eisen J.A."/>
            <person name="Karp P.D."/>
            <person name="Bovee D. Sr."/>
            <person name="Chapman P."/>
            <person name="Clendenning J."/>
            <person name="Deatherage G."/>
            <person name="Gillet W."/>
            <person name="Grant C."/>
            <person name="Kutyavin T."/>
            <person name="Levy R."/>
            <person name="Li M.-J."/>
            <person name="McClelland E."/>
            <person name="Palmieri A."/>
            <person name="Raymond C."/>
            <person name="Rouse G."/>
            <person name="Saenphimmachak C."/>
            <person name="Wu Z."/>
            <person name="Romero P."/>
            <person name="Gordon D."/>
            <person name="Zhang S."/>
            <person name="Yoo H."/>
            <person name="Tao Y."/>
            <person name="Biddle P."/>
            <person name="Jung M."/>
            <person name="Krespan W."/>
            <person name="Perry M."/>
            <person name="Gordon-Kamm B."/>
            <person name="Liao L."/>
            <person name="Kim S."/>
            <person name="Hendrick C."/>
            <person name="Zhao Z.-Y."/>
            <person name="Dolan M."/>
            <person name="Chumley F."/>
            <person name="Tingey S.V."/>
            <person name="Tomb J.-F."/>
            <person name="Gordon M.P."/>
            <person name="Olson M.V."/>
            <person name="Nester E.W."/>
        </authorList>
    </citation>
    <scope>NUCLEOTIDE SEQUENCE [LARGE SCALE GENOMIC DNA]</scope>
    <source>
        <strain>C58 / ATCC 33970</strain>
    </source>
</reference>
<reference key="2">
    <citation type="journal article" date="2001" name="Science">
        <title>Genome sequence of the plant pathogen and biotechnology agent Agrobacterium tumefaciens C58.</title>
        <authorList>
            <person name="Goodner B."/>
            <person name="Hinkle G."/>
            <person name="Gattung S."/>
            <person name="Miller N."/>
            <person name="Blanchard M."/>
            <person name="Qurollo B."/>
            <person name="Goldman B.S."/>
            <person name="Cao Y."/>
            <person name="Askenazi M."/>
            <person name="Halling C."/>
            <person name="Mullin L."/>
            <person name="Houmiel K."/>
            <person name="Gordon J."/>
            <person name="Vaudin M."/>
            <person name="Iartchouk O."/>
            <person name="Epp A."/>
            <person name="Liu F."/>
            <person name="Wollam C."/>
            <person name="Allinger M."/>
            <person name="Doughty D."/>
            <person name="Scott C."/>
            <person name="Lappas C."/>
            <person name="Markelz B."/>
            <person name="Flanagan C."/>
            <person name="Crowell C."/>
            <person name="Gurson J."/>
            <person name="Lomo C."/>
            <person name="Sear C."/>
            <person name="Strub G."/>
            <person name="Cielo C."/>
            <person name="Slater S."/>
        </authorList>
    </citation>
    <scope>NUCLEOTIDE SEQUENCE [LARGE SCALE GENOMIC DNA]</scope>
    <source>
        <strain>C58 / ATCC 33970</strain>
    </source>
</reference>
<accession>Q8U6M1</accession>
<accession>Q7CVV4</accession>
<proteinExistence type="inferred from homology"/>
<sequence>MITVKPGSVVFENVRKTFGAFTAIPDLSLTIEPGTLVTLLGPSGCGKTTTLRMLAGLEHPNSGRILIGGKDVTMLPANERDVSMVFQSYALFPHMSALDNVAYGLQSSGLKKAEAREKAEEGLKLVGLAGMGHRLPAELSGGQQQRVAVARALVLEPQVLLLDEPLSNLDARLRRRVRTDIRELQQRIGFTAVYVTHDQDEALAVSDRIIVMKEGEIAQSGAPRELYEAPASSFIADFMGEANVVPCEVVSQTGDESLVRVGTMEHRVRSRGPRSGSAKLAVRPGAITIGAAGGSGMPGRVLHTAYLGGHIEYEVETEVGTLFIIDHEMNHTQRETSDVTLNFKNRGIALIDA</sequence>
<feature type="chain" id="PRO_0000092344" description="Fe(3+) ions import ATP-binding protein FbpC">
    <location>
        <begin position="1"/>
        <end position="353"/>
    </location>
</feature>
<feature type="domain" description="ABC transporter" evidence="1">
    <location>
        <begin position="9"/>
        <end position="239"/>
    </location>
</feature>
<feature type="binding site" evidence="1">
    <location>
        <begin position="41"/>
        <end position="48"/>
    </location>
    <ligand>
        <name>ATP</name>
        <dbReference type="ChEBI" id="CHEBI:30616"/>
    </ligand>
</feature>
<keyword id="KW-0067">ATP-binding</keyword>
<keyword id="KW-0997">Cell inner membrane</keyword>
<keyword id="KW-1003">Cell membrane</keyword>
<keyword id="KW-0406">Ion transport</keyword>
<keyword id="KW-0408">Iron</keyword>
<keyword id="KW-0410">Iron transport</keyword>
<keyword id="KW-0472">Membrane</keyword>
<keyword id="KW-0547">Nucleotide-binding</keyword>
<keyword id="KW-1185">Reference proteome</keyword>
<keyword id="KW-1278">Translocase</keyword>
<keyword id="KW-0813">Transport</keyword>
<name>FBPC_AGRFC</name>
<organism>
    <name type="scientific">Agrobacterium fabrum (strain C58 / ATCC 33970)</name>
    <name type="common">Agrobacterium tumefaciens (strain C58)</name>
    <dbReference type="NCBI Taxonomy" id="176299"/>
    <lineage>
        <taxon>Bacteria</taxon>
        <taxon>Pseudomonadati</taxon>
        <taxon>Pseudomonadota</taxon>
        <taxon>Alphaproteobacteria</taxon>
        <taxon>Hyphomicrobiales</taxon>
        <taxon>Rhizobiaceae</taxon>
        <taxon>Rhizobium/Agrobacterium group</taxon>
        <taxon>Agrobacterium</taxon>
        <taxon>Agrobacterium tumefaciens complex</taxon>
    </lineage>
</organism>
<dbReference type="EC" id="7.2.2.7" evidence="1"/>
<dbReference type="EMBL" id="AE007870">
    <property type="protein sequence ID" value="AAK88663.1"/>
    <property type="molecule type" value="Genomic_DNA"/>
</dbReference>
<dbReference type="PIR" id="AF3145">
    <property type="entry name" value="AF3145"/>
</dbReference>
<dbReference type="PIR" id="E98142">
    <property type="entry name" value="E98142"/>
</dbReference>
<dbReference type="RefSeq" id="NP_355878.1">
    <property type="nucleotide sequence ID" value="NC_003063.2"/>
</dbReference>
<dbReference type="RefSeq" id="WP_010974159.1">
    <property type="nucleotide sequence ID" value="NC_003063.2"/>
</dbReference>
<dbReference type="SMR" id="Q8U6M1"/>
<dbReference type="STRING" id="176299.Atu4786"/>
<dbReference type="EnsemblBacteria" id="AAK88663">
    <property type="protein sequence ID" value="AAK88663"/>
    <property type="gene ID" value="Atu4786"/>
</dbReference>
<dbReference type="GeneID" id="1136660"/>
<dbReference type="KEGG" id="atu:Atu4786"/>
<dbReference type="PATRIC" id="fig|176299.10.peg.4593"/>
<dbReference type="eggNOG" id="COG3842">
    <property type="taxonomic scope" value="Bacteria"/>
</dbReference>
<dbReference type="HOGENOM" id="CLU_000604_1_1_5"/>
<dbReference type="OrthoDB" id="9802264at2"/>
<dbReference type="PhylomeDB" id="Q8U6M1"/>
<dbReference type="BioCyc" id="AGRO:ATU4786-MONOMER"/>
<dbReference type="Proteomes" id="UP000000813">
    <property type="component" value="Chromosome linear"/>
</dbReference>
<dbReference type="GO" id="GO:0043190">
    <property type="term" value="C:ATP-binding cassette (ABC) transporter complex"/>
    <property type="evidence" value="ECO:0007669"/>
    <property type="project" value="InterPro"/>
</dbReference>
<dbReference type="GO" id="GO:0015408">
    <property type="term" value="F:ABC-type ferric iron transporter activity"/>
    <property type="evidence" value="ECO:0007669"/>
    <property type="project" value="UniProtKB-EC"/>
</dbReference>
<dbReference type="GO" id="GO:0005524">
    <property type="term" value="F:ATP binding"/>
    <property type="evidence" value="ECO:0007669"/>
    <property type="project" value="UniProtKB-KW"/>
</dbReference>
<dbReference type="GO" id="GO:0016887">
    <property type="term" value="F:ATP hydrolysis activity"/>
    <property type="evidence" value="ECO:0007669"/>
    <property type="project" value="InterPro"/>
</dbReference>
<dbReference type="FunFam" id="3.40.50.300:FF:000425">
    <property type="entry name" value="Probable ABC transporter, ATP-binding subunit"/>
    <property type="match status" value="1"/>
</dbReference>
<dbReference type="Gene3D" id="2.40.50.100">
    <property type="match status" value="1"/>
</dbReference>
<dbReference type="Gene3D" id="3.40.50.300">
    <property type="entry name" value="P-loop containing nucleotide triphosphate hydrolases"/>
    <property type="match status" value="1"/>
</dbReference>
<dbReference type="InterPro" id="IPR003593">
    <property type="entry name" value="AAA+_ATPase"/>
</dbReference>
<dbReference type="InterPro" id="IPR050093">
    <property type="entry name" value="ABC_SmlMolc_Importer"/>
</dbReference>
<dbReference type="InterPro" id="IPR003439">
    <property type="entry name" value="ABC_transporter-like_ATP-bd"/>
</dbReference>
<dbReference type="InterPro" id="IPR017871">
    <property type="entry name" value="ABC_transporter-like_CS"/>
</dbReference>
<dbReference type="InterPro" id="IPR008995">
    <property type="entry name" value="Mo/tungstate-bd_C_term_dom"/>
</dbReference>
<dbReference type="InterPro" id="IPR027417">
    <property type="entry name" value="P-loop_NTPase"/>
</dbReference>
<dbReference type="InterPro" id="IPR013611">
    <property type="entry name" value="Transp-assoc_OB_typ2"/>
</dbReference>
<dbReference type="PANTHER" id="PTHR42781">
    <property type="entry name" value="SPERMIDINE/PUTRESCINE IMPORT ATP-BINDING PROTEIN POTA"/>
    <property type="match status" value="1"/>
</dbReference>
<dbReference type="PANTHER" id="PTHR42781:SF4">
    <property type="entry name" value="SPERMIDINE_PUTRESCINE IMPORT ATP-BINDING PROTEIN POTA"/>
    <property type="match status" value="1"/>
</dbReference>
<dbReference type="Pfam" id="PF00005">
    <property type="entry name" value="ABC_tran"/>
    <property type="match status" value="1"/>
</dbReference>
<dbReference type="Pfam" id="PF08402">
    <property type="entry name" value="TOBE_2"/>
    <property type="match status" value="1"/>
</dbReference>
<dbReference type="SMART" id="SM00382">
    <property type="entry name" value="AAA"/>
    <property type="match status" value="1"/>
</dbReference>
<dbReference type="SUPFAM" id="SSF50331">
    <property type="entry name" value="MOP-like"/>
    <property type="match status" value="1"/>
</dbReference>
<dbReference type="SUPFAM" id="SSF52540">
    <property type="entry name" value="P-loop containing nucleoside triphosphate hydrolases"/>
    <property type="match status" value="1"/>
</dbReference>
<dbReference type="PROSITE" id="PS00211">
    <property type="entry name" value="ABC_TRANSPORTER_1"/>
    <property type="match status" value="1"/>
</dbReference>
<dbReference type="PROSITE" id="PS50893">
    <property type="entry name" value="ABC_TRANSPORTER_2"/>
    <property type="match status" value="1"/>
</dbReference>
<dbReference type="PROSITE" id="PS51242">
    <property type="entry name" value="FBPC"/>
    <property type="match status" value="1"/>
</dbReference>
<comment type="function">
    <text evidence="1">Part of the ABC transporter complex FbpABC involved in Fe(3+) ions import. Responsible for energy coupling to the transport system.</text>
</comment>
<comment type="catalytic activity">
    <reaction evidence="1">
        <text>Fe(3+)(out) + ATP + H2O = Fe(3+)(in) + ADP + phosphate + H(+)</text>
        <dbReference type="Rhea" id="RHEA:12332"/>
        <dbReference type="ChEBI" id="CHEBI:15377"/>
        <dbReference type="ChEBI" id="CHEBI:15378"/>
        <dbReference type="ChEBI" id="CHEBI:29034"/>
        <dbReference type="ChEBI" id="CHEBI:30616"/>
        <dbReference type="ChEBI" id="CHEBI:43474"/>
        <dbReference type="ChEBI" id="CHEBI:456216"/>
        <dbReference type="EC" id="7.2.2.7"/>
    </reaction>
</comment>
<comment type="subunit">
    <text evidence="1">The complex is composed of two ATP-binding proteins (FbpC), two transmembrane proteins (FbpB) and a solute-binding protein (FbpA).</text>
</comment>
<comment type="subcellular location">
    <subcellularLocation>
        <location evidence="1">Cell inner membrane</location>
        <topology evidence="1">Peripheral membrane protein</topology>
    </subcellularLocation>
</comment>
<comment type="similarity">
    <text evidence="1">Belongs to the ABC transporter superfamily. Fe(3+) ion importer (TC 3.A.1.10) family.</text>
</comment>
<evidence type="ECO:0000255" key="1">
    <source>
        <dbReference type="HAMAP-Rule" id="MF_01706"/>
    </source>
</evidence>